<name>NEUR_DROME</name>
<comment type="function">
    <text>Involved in neurogenesis. Interacts with other neurogenic proteins in the specification of the neuroblast versus epidermoblast cell fate.</text>
</comment>
<comment type="subcellular location">
    <subcellularLocation>
        <location evidence="7">Nucleus</location>
    </subcellularLocation>
</comment>
<comment type="alternative products">
    <event type="alternative splicing"/>
    <isoform>
        <id>P29503-1</id>
        <name>1</name>
        <sequence type="displayed"/>
    </isoform>
    <isoform>
        <id>P29503-2</id>
        <name>2</name>
        <sequence type="described" ref="VSP_008046"/>
    </isoform>
    <isoform>
        <id>P29503-3</id>
        <name>3</name>
        <sequence type="described" ref="VSP_008045"/>
    </isoform>
    <isoform>
        <id>P29503-4</id>
        <name>4</name>
        <sequence type="described" ref="VSP_008045 VSP_008046"/>
    </isoform>
</comment>
<comment type="sequence caution" evidence="7">
    <conflict type="frameshift">
        <sequence resource="EMBL-CDS" id="CAA43806"/>
    </conflict>
</comment>
<accession>P29503</accession>
<accession>Q26306</accession>
<accession>Q27273</accession>
<accession>Q8INP6</accession>
<accession>Q8INP7</accession>
<accession>Q960M1</accession>
<keyword id="KW-0002">3D-structure</keyword>
<keyword id="KW-0025">Alternative splicing</keyword>
<keyword id="KW-0217">Developmental protein</keyword>
<keyword id="KW-0221">Differentiation</keyword>
<keyword id="KW-0238">DNA-binding</keyword>
<keyword id="KW-0479">Metal-binding</keyword>
<keyword id="KW-0524">Neurogenesis</keyword>
<keyword id="KW-0539">Nucleus</keyword>
<keyword id="KW-0597">Phosphoprotein</keyword>
<keyword id="KW-1185">Reference proteome</keyword>
<keyword id="KW-0677">Repeat</keyword>
<keyword id="KW-0862">Zinc</keyword>
<keyword id="KW-0863">Zinc-finger</keyword>
<proteinExistence type="evidence at protein level"/>
<feature type="chain" id="PRO_0000055975" description="Protein neuralized">
    <location>
        <begin position="1"/>
        <end position="754"/>
    </location>
</feature>
<feature type="domain" description="NHR 1" evidence="2">
    <location>
        <begin position="106"/>
        <end position="260"/>
    </location>
</feature>
<feature type="domain" description="NHR 2" evidence="2">
    <location>
        <begin position="368"/>
        <end position="523"/>
    </location>
</feature>
<feature type="zinc finger region" description="RING-type" evidence="1">
    <location>
        <begin position="701"/>
        <end position="742"/>
    </location>
</feature>
<feature type="region of interest" description="Disordered" evidence="3">
    <location>
        <begin position="280"/>
        <end position="308"/>
    </location>
</feature>
<feature type="compositionally biased region" description="Low complexity" evidence="3">
    <location>
        <begin position="280"/>
        <end position="297"/>
    </location>
</feature>
<feature type="modified residue" description="Phosphoserine" evidence="4">
    <location>
        <position position="338"/>
    </location>
</feature>
<feature type="modified residue" description="Phosphoserine" evidence="4">
    <location>
        <position position="341"/>
    </location>
</feature>
<feature type="splice variant" id="VSP_008045" description="In isoform 3 and isoform 4." evidence="5">
    <original>MGLSDIPANYMQGSHPHLTLHPQQQHHQNQQHLQHLQQMQQLHNAMPTPAQQAAQVLAMESNELLMSTKDKLSSKKKMHLLKKIKKRFGL</original>
    <variation>MGQSAGKI</variation>
    <location>
        <begin position="1"/>
        <end position="90"/>
    </location>
</feature>
<feature type="splice variant" id="VSP_008046" description="In isoform 2 and isoform 4." evidence="5 6">
    <location>
        <position position="672"/>
    </location>
</feature>
<feature type="sequence conflict" description="In Ref. 1; CAA43806." evidence="7" ref="1">
    <original>T</original>
    <variation>S</variation>
    <location>
        <position position="234"/>
    </location>
</feature>
<feature type="sequence conflict" description="In Ref. 3; AAB27151." evidence="7" ref="3">
    <original>A</original>
    <variation>V</variation>
    <location>
        <position position="270"/>
    </location>
</feature>
<feature type="sequence conflict" description="In Ref. 3; AAB27151." evidence="7" ref="3">
    <original>T</original>
    <variation>N</variation>
    <location>
        <position position="588"/>
    </location>
</feature>
<feature type="sequence conflict" description="In Ref. 3; AAB27151." evidence="7" ref="3">
    <original>S</original>
    <variation>R</variation>
    <location>
        <position position="694"/>
    </location>
</feature>
<feature type="strand" evidence="8">
    <location>
        <begin position="109"/>
        <end position="113"/>
    </location>
</feature>
<feature type="strand" evidence="9">
    <location>
        <begin position="117"/>
        <end position="119"/>
    </location>
</feature>
<feature type="strand" evidence="9">
    <location>
        <begin position="125"/>
        <end position="128"/>
    </location>
</feature>
<feature type="strand" evidence="9">
    <location>
        <begin position="130"/>
        <end position="133"/>
    </location>
</feature>
<feature type="strand" evidence="9">
    <location>
        <begin position="136"/>
        <end position="141"/>
    </location>
</feature>
<feature type="strand" evidence="9">
    <location>
        <begin position="149"/>
        <end position="156"/>
    </location>
</feature>
<feature type="strand" evidence="8">
    <location>
        <begin position="158"/>
        <end position="162"/>
    </location>
</feature>
<feature type="strand" evidence="9">
    <location>
        <begin position="165"/>
        <end position="171"/>
    </location>
</feature>
<feature type="helix" evidence="9">
    <location>
        <begin position="173"/>
        <end position="176"/>
    </location>
</feature>
<feature type="helix" evidence="9">
    <location>
        <begin position="184"/>
        <end position="188"/>
    </location>
</feature>
<feature type="strand" evidence="9">
    <location>
        <begin position="194"/>
        <end position="198"/>
    </location>
</feature>
<feature type="helix" evidence="9">
    <location>
        <begin position="201"/>
        <end position="203"/>
    </location>
</feature>
<feature type="strand" evidence="9">
    <location>
        <begin position="209"/>
        <end position="214"/>
    </location>
</feature>
<feature type="strand" evidence="9">
    <location>
        <begin position="220"/>
        <end position="224"/>
    </location>
</feature>
<feature type="strand" evidence="9">
    <location>
        <begin position="227"/>
        <end position="233"/>
    </location>
</feature>
<feature type="strand" evidence="9">
    <location>
        <begin position="242"/>
        <end position="247"/>
    </location>
</feature>
<feature type="strand" evidence="9">
    <location>
        <begin position="250"/>
        <end position="257"/>
    </location>
</feature>
<feature type="helix" evidence="8">
    <location>
        <begin position="260"/>
        <end position="263"/>
    </location>
</feature>
<sequence>MGLSDIPANYMQGSHPHLTLHPQQQHHQNQQHLQHLQQMQQLHNAMPTPAQQAAQVLAMESNELLMSTKDKLSSKKKMHLLKKIKKRFGLVRRSPSSCPGPNNLPPLQFHSVHGDNIRISRDGTLARRFESFCRAITFSARPVRINERICVKFAEISNNWNGGIRFGFTSNDPVTLEGTLPKYACPDLTNRPGFWAKALHEQYCEKDNILYYYVNGAGDVIYGINNEEKGVILTGIDTRSLLWTVIDIYGNCTGIEFLDSRIYMYQQQPAAIPMATVPAQQQQMPQPAANASSALNSHHPHQQSRRSLPGHTAAIEHDLERHVMPSLQSLHLAGNGGSVASVEQAAIAHDLANGLPPLRYNANGRLIPVPFHNTKGRNVRLSQDRFVASRTESDFCQGYVFTARPIRIGEKLIVQVLKTEQMYVGALALGLTSCNPAMLQPNDLPNDSDFLLDRPEYWVVSKDIAAAPQRGDEIAFFVAPNGEVSISKNNGPAVVVMHVDQSLQLWAFLDVYGSTQSLRMFRQQLPNMVAYPSQPQVNVNASSSSACNAASTSRMLPMTESMSSLNAGATAKLLHHPSQLSVAQSTSTLASAGGVNGSRMISMPSNGDILQIQPNGGGTVLVVNLPPASSSHDINGQLAARPTATVTSSGVLAGACSSGTLISTTSSQYIEQPIANSTNNAANKWKDSLSDQQSTDSSAECTICYENPIDSVLYMCGHMCMCYDCAIEQWRGVGGGQCPLCRAVIRDVIRTYTT</sequence>
<dbReference type="EMBL" id="X61617">
    <property type="protein sequence ID" value="CAA43806.1"/>
    <property type="status" value="ALT_FRAME"/>
    <property type="molecule type" value="Genomic_DNA"/>
</dbReference>
<dbReference type="EMBL" id="S62597">
    <property type="protein sequence ID" value="AAB27151.1"/>
    <property type="molecule type" value="mRNA"/>
</dbReference>
<dbReference type="EMBL" id="S62583">
    <property type="protein sequence ID" value="AAB27147.1"/>
    <property type="molecule type" value="mRNA"/>
</dbReference>
<dbReference type="EMBL" id="L12218">
    <property type="protein sequence ID" value="AAA28403.1"/>
    <property type="molecule type" value="mRNA"/>
</dbReference>
<dbReference type="EMBL" id="AE014297">
    <property type="protein sequence ID" value="AAF54330.1"/>
    <property type="molecule type" value="Genomic_DNA"/>
</dbReference>
<dbReference type="EMBL" id="AE014297">
    <property type="protein sequence ID" value="AAF54326.2"/>
    <property type="molecule type" value="Genomic_DNA"/>
</dbReference>
<dbReference type="EMBL" id="AE014297">
    <property type="protein sequence ID" value="AAN13406.1"/>
    <property type="molecule type" value="Genomic_DNA"/>
</dbReference>
<dbReference type="EMBL" id="AE014297">
    <property type="protein sequence ID" value="AAN13407.1"/>
    <property type="molecule type" value="Genomic_DNA"/>
</dbReference>
<dbReference type="EMBL" id="AY051987">
    <property type="protein sequence ID" value="AAK93411.1"/>
    <property type="molecule type" value="mRNA"/>
</dbReference>
<dbReference type="EMBL" id="BT003772">
    <property type="protein sequence ID" value="AAO41451.1"/>
    <property type="molecule type" value="mRNA"/>
</dbReference>
<dbReference type="PIR" id="S35371">
    <property type="entry name" value="S35371"/>
</dbReference>
<dbReference type="PIR" id="S35503">
    <property type="entry name" value="S35503"/>
</dbReference>
<dbReference type="RefSeq" id="NP_001163563.1">
    <molecule id="P29503-3"/>
    <property type="nucleotide sequence ID" value="NM_001170092.3"/>
</dbReference>
<dbReference type="RefSeq" id="NP_476652.1">
    <molecule id="P29503-1"/>
    <property type="nucleotide sequence ID" value="NM_057304.5"/>
</dbReference>
<dbReference type="RefSeq" id="NP_731309.1">
    <molecule id="P29503-4"/>
    <property type="nucleotide sequence ID" value="NM_169255.3"/>
</dbReference>
<dbReference type="RefSeq" id="NP_731310.1">
    <molecule id="P29503-3"/>
    <property type="nucleotide sequence ID" value="NM_169256.3"/>
</dbReference>
<dbReference type="RefSeq" id="NP_731311.1">
    <molecule id="P29503-2"/>
    <property type="nucleotide sequence ID" value="NM_169257.3"/>
</dbReference>
<dbReference type="PDB" id="2YUE">
    <property type="method" value="NMR"/>
    <property type="chains" value="A=106-266"/>
</dbReference>
<dbReference type="PDB" id="4KG0">
    <property type="method" value="X-ray"/>
    <property type="resolution" value="2.10 A"/>
    <property type="chains" value="A=105-260"/>
</dbReference>
<dbReference type="PDBsum" id="2YUE"/>
<dbReference type="PDBsum" id="4KG0"/>
<dbReference type="SMR" id="P29503"/>
<dbReference type="BioGRID" id="66253">
    <property type="interactions" value="30"/>
</dbReference>
<dbReference type="DIP" id="DIP-17176N"/>
<dbReference type="FunCoup" id="P29503">
    <property type="interactions" value="636"/>
</dbReference>
<dbReference type="IntAct" id="P29503">
    <property type="interactions" value="5"/>
</dbReference>
<dbReference type="MINT" id="P29503"/>
<dbReference type="STRING" id="7227.FBpp0081481"/>
<dbReference type="GlyGen" id="P29503">
    <property type="glycosylation" value="1 site"/>
</dbReference>
<dbReference type="iPTMnet" id="P29503"/>
<dbReference type="PaxDb" id="7227-FBpp0081481"/>
<dbReference type="DNASU" id="41085"/>
<dbReference type="EnsemblMetazoa" id="FBtr0082001">
    <molecule id="P29503-3"/>
    <property type="protein sequence ID" value="FBpp0081479"/>
    <property type="gene ID" value="FBgn0002932"/>
</dbReference>
<dbReference type="EnsemblMetazoa" id="FBtr0082002">
    <molecule id="P29503-4"/>
    <property type="protein sequence ID" value="FBpp0081480"/>
    <property type="gene ID" value="FBgn0002932"/>
</dbReference>
<dbReference type="EnsemblMetazoa" id="FBtr0082003">
    <molecule id="P29503-1"/>
    <property type="protein sequence ID" value="FBpp0081481"/>
    <property type="gene ID" value="FBgn0002932"/>
</dbReference>
<dbReference type="EnsemblMetazoa" id="FBtr0082004">
    <molecule id="P29503-2"/>
    <property type="protein sequence ID" value="FBpp0081482"/>
    <property type="gene ID" value="FBgn0002932"/>
</dbReference>
<dbReference type="EnsemblMetazoa" id="FBtr0300414">
    <molecule id="P29503-3"/>
    <property type="protein sequence ID" value="FBpp0289643"/>
    <property type="gene ID" value="FBgn0002932"/>
</dbReference>
<dbReference type="GeneID" id="41085"/>
<dbReference type="KEGG" id="dme:Dmel_CG11988"/>
<dbReference type="UCSC" id="CG11988-RA">
    <molecule id="P29503-1"/>
    <property type="organism name" value="d. melanogaster"/>
</dbReference>
<dbReference type="AGR" id="FB:FBgn0002932"/>
<dbReference type="CTD" id="41085"/>
<dbReference type="FlyBase" id="FBgn0002932">
    <property type="gene designation" value="neur"/>
</dbReference>
<dbReference type="VEuPathDB" id="VectorBase:FBgn0002932"/>
<dbReference type="eggNOG" id="KOG4172">
    <property type="taxonomic scope" value="Eukaryota"/>
</dbReference>
<dbReference type="eggNOG" id="KOG4625">
    <property type="taxonomic scope" value="Eukaryota"/>
</dbReference>
<dbReference type="GeneTree" id="ENSGT00940000166233"/>
<dbReference type="InParanoid" id="P29503"/>
<dbReference type="OMA" id="HTVRGKH"/>
<dbReference type="OrthoDB" id="6078042at2759"/>
<dbReference type="PhylomeDB" id="P29503"/>
<dbReference type="SignaLink" id="P29503"/>
<dbReference type="BioGRID-ORCS" id="41085">
    <property type="hits" value="0 hits in 3 CRISPR screens"/>
</dbReference>
<dbReference type="EvolutionaryTrace" id="P29503"/>
<dbReference type="GenomeRNAi" id="41085"/>
<dbReference type="PRO" id="PR:P29503"/>
<dbReference type="Proteomes" id="UP000000803">
    <property type="component" value="Chromosome 3R"/>
</dbReference>
<dbReference type="Bgee" id="FBgn0002932">
    <property type="expression patterns" value="Expressed in polar follicle cell (Drosophila) in ovary and 190 other cell types or tissues"/>
</dbReference>
<dbReference type="ExpressionAtlas" id="P29503">
    <property type="expression patterns" value="baseline and differential"/>
</dbReference>
<dbReference type="GO" id="GO:0005737">
    <property type="term" value="C:cytoplasm"/>
    <property type="evidence" value="ECO:0000314"/>
    <property type="project" value="FlyBase"/>
</dbReference>
<dbReference type="GO" id="GO:0005829">
    <property type="term" value="C:cytosol"/>
    <property type="evidence" value="ECO:0000304"/>
    <property type="project" value="Reactome"/>
</dbReference>
<dbReference type="GO" id="GO:0005634">
    <property type="term" value="C:nucleus"/>
    <property type="evidence" value="ECO:0007669"/>
    <property type="project" value="UniProtKB-SubCell"/>
</dbReference>
<dbReference type="GO" id="GO:0048471">
    <property type="term" value="C:perinuclear region of cytoplasm"/>
    <property type="evidence" value="ECO:0000314"/>
    <property type="project" value="FlyBase"/>
</dbReference>
<dbReference type="GO" id="GO:0005886">
    <property type="term" value="C:plasma membrane"/>
    <property type="evidence" value="ECO:0000314"/>
    <property type="project" value="FlyBase"/>
</dbReference>
<dbReference type="GO" id="GO:0003677">
    <property type="term" value="F:DNA binding"/>
    <property type="evidence" value="ECO:0007669"/>
    <property type="project" value="UniProtKB-KW"/>
</dbReference>
<dbReference type="GO" id="GO:1901981">
    <property type="term" value="F:phosphatidylinositol phosphate binding"/>
    <property type="evidence" value="ECO:0000314"/>
    <property type="project" value="FlyBase"/>
</dbReference>
<dbReference type="GO" id="GO:0061630">
    <property type="term" value="F:ubiquitin protein ligase activity"/>
    <property type="evidence" value="ECO:0000314"/>
    <property type="project" value="FlyBase"/>
</dbReference>
<dbReference type="GO" id="GO:0004842">
    <property type="term" value="F:ubiquitin-protein transferase activity"/>
    <property type="evidence" value="ECO:0000304"/>
    <property type="project" value="Reactome"/>
</dbReference>
<dbReference type="GO" id="GO:0008270">
    <property type="term" value="F:zinc ion binding"/>
    <property type="evidence" value="ECO:0000255"/>
    <property type="project" value="FlyBase"/>
</dbReference>
<dbReference type="GO" id="GO:0008356">
    <property type="term" value="P:asymmetric cell division"/>
    <property type="evidence" value="ECO:0000315"/>
    <property type="project" value="FlyBase"/>
</dbReference>
<dbReference type="GO" id="GO:0048749">
    <property type="term" value="P:compound eye development"/>
    <property type="evidence" value="ECO:0000315"/>
    <property type="project" value="FlyBase"/>
</dbReference>
<dbReference type="GO" id="GO:0030718">
    <property type="term" value="P:germ-line stem cell population maintenance"/>
    <property type="evidence" value="ECO:0000315"/>
    <property type="project" value="FlyBase"/>
</dbReference>
<dbReference type="GO" id="GO:0007476">
    <property type="term" value="P:imaginal disc-derived wing morphogenesis"/>
    <property type="evidence" value="ECO:0000315"/>
    <property type="project" value="FlyBase"/>
</dbReference>
<dbReference type="GO" id="GO:0007616">
    <property type="term" value="P:long-term memory"/>
    <property type="evidence" value="ECO:0000315"/>
    <property type="project" value="FlyBase"/>
</dbReference>
<dbReference type="GO" id="GO:0007498">
    <property type="term" value="P:mesoderm development"/>
    <property type="evidence" value="ECO:0000315"/>
    <property type="project" value="FlyBase"/>
</dbReference>
<dbReference type="GO" id="GO:0035204">
    <property type="term" value="P:negative regulation of lamellocyte differentiation"/>
    <property type="evidence" value="ECO:0000315"/>
    <property type="project" value="FlyBase"/>
</dbReference>
<dbReference type="GO" id="GO:0007399">
    <property type="term" value="P:nervous system development"/>
    <property type="evidence" value="ECO:0000315"/>
    <property type="project" value="FlyBase"/>
</dbReference>
<dbReference type="GO" id="GO:0007400">
    <property type="term" value="P:neuroblast fate determination"/>
    <property type="evidence" value="ECO:0000315"/>
    <property type="project" value="FlyBase"/>
</dbReference>
<dbReference type="GO" id="GO:0007422">
    <property type="term" value="P:peripheral nervous system development"/>
    <property type="evidence" value="ECO:0000315"/>
    <property type="project" value="FlyBase"/>
</dbReference>
<dbReference type="GO" id="GO:0045807">
    <property type="term" value="P:positive regulation of endocytosis"/>
    <property type="evidence" value="ECO:0000315"/>
    <property type="project" value="FlyBase"/>
</dbReference>
<dbReference type="GO" id="GO:0045747">
    <property type="term" value="P:positive regulation of Notch signaling pathway"/>
    <property type="evidence" value="ECO:0000315"/>
    <property type="project" value="FlyBase"/>
</dbReference>
<dbReference type="GO" id="GO:0008104">
    <property type="term" value="P:protein localization"/>
    <property type="evidence" value="ECO:0000315"/>
    <property type="project" value="FlyBase"/>
</dbReference>
<dbReference type="GO" id="GO:0000209">
    <property type="term" value="P:protein polyubiquitination"/>
    <property type="evidence" value="ECO:0000314"/>
    <property type="project" value="FlyBase"/>
</dbReference>
<dbReference type="GO" id="GO:0045314">
    <property type="term" value="P:regulation of compound eye photoreceptor development"/>
    <property type="evidence" value="ECO:0000315"/>
    <property type="project" value="FlyBase"/>
</dbReference>
<dbReference type="GO" id="GO:0046532">
    <property type="term" value="P:regulation of photoreceptor cell differentiation"/>
    <property type="evidence" value="ECO:0000315"/>
    <property type="project" value="FlyBase"/>
</dbReference>
<dbReference type="GO" id="GO:0007423">
    <property type="term" value="P:sensory organ development"/>
    <property type="evidence" value="ECO:0000315"/>
    <property type="project" value="FlyBase"/>
</dbReference>
<dbReference type="GO" id="GO:0016360">
    <property type="term" value="P:sensory organ precursor cell fate determination"/>
    <property type="evidence" value="ECO:0000314"/>
    <property type="project" value="FlyBase"/>
</dbReference>
<dbReference type="GO" id="GO:0007419">
    <property type="term" value="P:ventral cord development"/>
    <property type="evidence" value="ECO:0007001"/>
    <property type="project" value="FlyBase"/>
</dbReference>
<dbReference type="CDD" id="cd16647">
    <property type="entry name" value="mRING-HC-C3HC5_NEU1"/>
    <property type="match status" value="1"/>
</dbReference>
<dbReference type="FunFam" id="3.30.40.10:FF:000441">
    <property type="entry name" value="Neuralized, isoform B"/>
    <property type="match status" value="1"/>
</dbReference>
<dbReference type="FunFam" id="2.60.120.920:FF:000005">
    <property type="entry name" value="Putative E3 ubiquitin-protein ligase NEURL1B"/>
    <property type="match status" value="2"/>
</dbReference>
<dbReference type="Gene3D" id="2.60.120.920">
    <property type="match status" value="2"/>
</dbReference>
<dbReference type="Gene3D" id="3.30.40.10">
    <property type="entry name" value="Zinc/RING finger domain, C3HC4 (zinc finger)"/>
    <property type="match status" value="1"/>
</dbReference>
<dbReference type="InterPro" id="IPR043136">
    <property type="entry name" value="B30.2/SPRY_sf"/>
</dbReference>
<dbReference type="InterPro" id="IPR037962">
    <property type="entry name" value="Neuralized"/>
</dbReference>
<dbReference type="InterPro" id="IPR006573">
    <property type="entry name" value="NHR_dom"/>
</dbReference>
<dbReference type="InterPro" id="IPR001841">
    <property type="entry name" value="Znf_RING"/>
</dbReference>
<dbReference type="InterPro" id="IPR013083">
    <property type="entry name" value="Znf_RING/FYVE/PHD"/>
</dbReference>
<dbReference type="PANTHER" id="PTHR12429">
    <property type="entry name" value="NEURALIZED"/>
    <property type="match status" value="1"/>
</dbReference>
<dbReference type="PANTHER" id="PTHR12429:SF8">
    <property type="entry name" value="NEURALIZED-LIKE PROTEIN 2"/>
    <property type="match status" value="1"/>
</dbReference>
<dbReference type="Pfam" id="PF07177">
    <property type="entry name" value="Neuralized"/>
    <property type="match status" value="2"/>
</dbReference>
<dbReference type="Pfam" id="PF13920">
    <property type="entry name" value="zf-C3HC4_3"/>
    <property type="match status" value="1"/>
</dbReference>
<dbReference type="SMART" id="SM00588">
    <property type="entry name" value="NEUZ"/>
    <property type="match status" value="2"/>
</dbReference>
<dbReference type="SMART" id="SM00184">
    <property type="entry name" value="RING"/>
    <property type="match status" value="1"/>
</dbReference>
<dbReference type="SUPFAM" id="SSF57850">
    <property type="entry name" value="RING/U-box"/>
    <property type="match status" value="1"/>
</dbReference>
<dbReference type="PROSITE" id="PS51065">
    <property type="entry name" value="NHR"/>
    <property type="match status" value="2"/>
</dbReference>
<dbReference type="PROSITE" id="PS50089">
    <property type="entry name" value="ZF_RING_2"/>
    <property type="match status" value="1"/>
</dbReference>
<protein>
    <recommendedName>
        <fullName>Protein neuralized</fullName>
    </recommendedName>
</protein>
<reference key="1">
    <citation type="journal article" date="1991" name="EMBO J.">
        <title>The Drosophila neurogenic gene neuralized encodes a novel protein and is expressed in precursors of larval and adult neurons.</title>
        <authorList>
            <person name="Boulianne G.L."/>
            <person name="de la Concha A."/>
            <person name="Campos-Ortega J.A."/>
            <person name="Jan L.Y."/>
            <person name="Jan Y.N."/>
        </authorList>
    </citation>
    <scope>NUCLEOTIDE SEQUENCE [GENOMIC DNA / MRNA] (ISOFORM 2)</scope>
    <source>
        <strain>Oregon-R</strain>
    </source>
</reference>
<reference key="2">
    <citation type="journal article" date="1993" name="EMBO J.">
        <authorList>
            <person name="Boulianne G.L."/>
            <person name="de la Concha A."/>
            <person name="Campos-Ortega J.A."/>
            <person name="Jan L.Y."/>
            <person name="Jan Y.N."/>
        </authorList>
    </citation>
    <scope>ERRATUM OF PUBMED:1717258</scope>
</reference>
<reference key="3">
    <citation type="journal article" date="1993" name="EMBO J.">
        <title>The Drosophila neuralized gene encodes a C3HC4 zinc finger.</title>
        <authorList>
            <person name="Price B.D."/>
            <person name="Chang Z."/>
            <person name="Smith R."/>
            <person name="Bockheim S."/>
            <person name="Laughon A."/>
        </authorList>
    </citation>
    <scope>NUCLEOTIDE SEQUENCE [MRNA] (ISOFORM 1)</scope>
</reference>
<reference key="4">
    <citation type="journal article" date="2000" name="Science">
        <title>The genome sequence of Drosophila melanogaster.</title>
        <authorList>
            <person name="Adams M.D."/>
            <person name="Celniker S.E."/>
            <person name="Holt R.A."/>
            <person name="Evans C.A."/>
            <person name="Gocayne J.D."/>
            <person name="Amanatides P.G."/>
            <person name="Scherer S.E."/>
            <person name="Li P.W."/>
            <person name="Hoskins R.A."/>
            <person name="Galle R.F."/>
            <person name="George R.A."/>
            <person name="Lewis S.E."/>
            <person name="Richards S."/>
            <person name="Ashburner M."/>
            <person name="Henderson S.N."/>
            <person name="Sutton G.G."/>
            <person name="Wortman J.R."/>
            <person name="Yandell M.D."/>
            <person name="Zhang Q."/>
            <person name="Chen L.X."/>
            <person name="Brandon R.C."/>
            <person name="Rogers Y.-H.C."/>
            <person name="Blazej R.G."/>
            <person name="Champe M."/>
            <person name="Pfeiffer B.D."/>
            <person name="Wan K.H."/>
            <person name="Doyle C."/>
            <person name="Baxter E.G."/>
            <person name="Helt G."/>
            <person name="Nelson C.R."/>
            <person name="Miklos G.L.G."/>
            <person name="Abril J.F."/>
            <person name="Agbayani A."/>
            <person name="An H.-J."/>
            <person name="Andrews-Pfannkoch C."/>
            <person name="Baldwin D."/>
            <person name="Ballew R.M."/>
            <person name="Basu A."/>
            <person name="Baxendale J."/>
            <person name="Bayraktaroglu L."/>
            <person name="Beasley E.M."/>
            <person name="Beeson K.Y."/>
            <person name="Benos P.V."/>
            <person name="Berman B.P."/>
            <person name="Bhandari D."/>
            <person name="Bolshakov S."/>
            <person name="Borkova D."/>
            <person name="Botchan M.R."/>
            <person name="Bouck J."/>
            <person name="Brokstein P."/>
            <person name="Brottier P."/>
            <person name="Burtis K.C."/>
            <person name="Busam D.A."/>
            <person name="Butler H."/>
            <person name="Cadieu E."/>
            <person name="Center A."/>
            <person name="Chandra I."/>
            <person name="Cherry J.M."/>
            <person name="Cawley S."/>
            <person name="Dahlke C."/>
            <person name="Davenport L.B."/>
            <person name="Davies P."/>
            <person name="de Pablos B."/>
            <person name="Delcher A."/>
            <person name="Deng Z."/>
            <person name="Mays A.D."/>
            <person name="Dew I."/>
            <person name="Dietz S.M."/>
            <person name="Dodson K."/>
            <person name="Doup L.E."/>
            <person name="Downes M."/>
            <person name="Dugan-Rocha S."/>
            <person name="Dunkov B.C."/>
            <person name="Dunn P."/>
            <person name="Durbin K.J."/>
            <person name="Evangelista C.C."/>
            <person name="Ferraz C."/>
            <person name="Ferriera S."/>
            <person name="Fleischmann W."/>
            <person name="Fosler C."/>
            <person name="Gabrielian A.E."/>
            <person name="Garg N.S."/>
            <person name="Gelbart W.M."/>
            <person name="Glasser K."/>
            <person name="Glodek A."/>
            <person name="Gong F."/>
            <person name="Gorrell J.H."/>
            <person name="Gu Z."/>
            <person name="Guan P."/>
            <person name="Harris M."/>
            <person name="Harris N.L."/>
            <person name="Harvey D.A."/>
            <person name="Heiman T.J."/>
            <person name="Hernandez J.R."/>
            <person name="Houck J."/>
            <person name="Hostin D."/>
            <person name="Houston K.A."/>
            <person name="Howland T.J."/>
            <person name="Wei M.-H."/>
            <person name="Ibegwam C."/>
            <person name="Jalali M."/>
            <person name="Kalush F."/>
            <person name="Karpen G.H."/>
            <person name="Ke Z."/>
            <person name="Kennison J.A."/>
            <person name="Ketchum K.A."/>
            <person name="Kimmel B.E."/>
            <person name="Kodira C.D."/>
            <person name="Kraft C.L."/>
            <person name="Kravitz S."/>
            <person name="Kulp D."/>
            <person name="Lai Z."/>
            <person name="Lasko P."/>
            <person name="Lei Y."/>
            <person name="Levitsky A.A."/>
            <person name="Li J.H."/>
            <person name="Li Z."/>
            <person name="Liang Y."/>
            <person name="Lin X."/>
            <person name="Liu X."/>
            <person name="Mattei B."/>
            <person name="McIntosh T.C."/>
            <person name="McLeod M.P."/>
            <person name="McPherson D."/>
            <person name="Merkulov G."/>
            <person name="Milshina N.V."/>
            <person name="Mobarry C."/>
            <person name="Morris J."/>
            <person name="Moshrefi A."/>
            <person name="Mount S.M."/>
            <person name="Moy M."/>
            <person name="Murphy B."/>
            <person name="Murphy L."/>
            <person name="Muzny D.M."/>
            <person name="Nelson D.L."/>
            <person name="Nelson D.R."/>
            <person name="Nelson K.A."/>
            <person name="Nixon K."/>
            <person name="Nusskern D.R."/>
            <person name="Pacleb J.M."/>
            <person name="Palazzolo M."/>
            <person name="Pittman G.S."/>
            <person name="Pan S."/>
            <person name="Pollard J."/>
            <person name="Puri V."/>
            <person name="Reese M.G."/>
            <person name="Reinert K."/>
            <person name="Remington K."/>
            <person name="Saunders R.D.C."/>
            <person name="Scheeler F."/>
            <person name="Shen H."/>
            <person name="Shue B.C."/>
            <person name="Siden-Kiamos I."/>
            <person name="Simpson M."/>
            <person name="Skupski M.P."/>
            <person name="Smith T.J."/>
            <person name="Spier E."/>
            <person name="Spradling A.C."/>
            <person name="Stapleton M."/>
            <person name="Strong R."/>
            <person name="Sun E."/>
            <person name="Svirskas R."/>
            <person name="Tector C."/>
            <person name="Turner R."/>
            <person name="Venter E."/>
            <person name="Wang A.H."/>
            <person name="Wang X."/>
            <person name="Wang Z.-Y."/>
            <person name="Wassarman D.A."/>
            <person name="Weinstock G.M."/>
            <person name="Weissenbach J."/>
            <person name="Williams S.M."/>
            <person name="Woodage T."/>
            <person name="Worley K.C."/>
            <person name="Wu D."/>
            <person name="Yang S."/>
            <person name="Yao Q.A."/>
            <person name="Ye J."/>
            <person name="Yeh R.-F."/>
            <person name="Zaveri J.S."/>
            <person name="Zhan M."/>
            <person name="Zhang G."/>
            <person name="Zhao Q."/>
            <person name="Zheng L."/>
            <person name="Zheng X.H."/>
            <person name="Zhong F.N."/>
            <person name="Zhong W."/>
            <person name="Zhou X."/>
            <person name="Zhu S.C."/>
            <person name="Zhu X."/>
            <person name="Smith H.O."/>
            <person name="Gibbs R.A."/>
            <person name="Myers E.W."/>
            <person name="Rubin G.M."/>
            <person name="Venter J.C."/>
        </authorList>
    </citation>
    <scope>NUCLEOTIDE SEQUENCE [LARGE SCALE GENOMIC DNA]</scope>
    <source>
        <strain>Berkeley</strain>
    </source>
</reference>
<reference key="5">
    <citation type="journal article" date="2002" name="Genome Biol.">
        <title>Annotation of the Drosophila melanogaster euchromatic genome: a systematic review.</title>
        <authorList>
            <person name="Misra S."/>
            <person name="Crosby M.A."/>
            <person name="Mungall C.J."/>
            <person name="Matthews B.B."/>
            <person name="Campbell K.S."/>
            <person name="Hradecky P."/>
            <person name="Huang Y."/>
            <person name="Kaminker J.S."/>
            <person name="Millburn G.H."/>
            <person name="Prochnik S.E."/>
            <person name="Smith C.D."/>
            <person name="Tupy J.L."/>
            <person name="Whitfield E.J."/>
            <person name="Bayraktaroglu L."/>
            <person name="Berman B.P."/>
            <person name="Bettencourt B.R."/>
            <person name="Celniker S.E."/>
            <person name="de Grey A.D.N.J."/>
            <person name="Drysdale R.A."/>
            <person name="Harris N.L."/>
            <person name="Richter J."/>
            <person name="Russo S."/>
            <person name="Schroeder A.J."/>
            <person name="Shu S.Q."/>
            <person name="Stapleton M."/>
            <person name="Yamada C."/>
            <person name="Ashburner M."/>
            <person name="Gelbart W.M."/>
            <person name="Rubin G.M."/>
            <person name="Lewis S.E."/>
        </authorList>
    </citation>
    <scope>GENOME REANNOTATION</scope>
    <source>
        <strain>Berkeley</strain>
    </source>
</reference>
<reference key="6">
    <citation type="journal article" date="2002" name="Genome Biol.">
        <title>A Drosophila full-length cDNA resource.</title>
        <authorList>
            <person name="Stapleton M."/>
            <person name="Carlson J.W."/>
            <person name="Brokstein P."/>
            <person name="Yu C."/>
            <person name="Champe M."/>
            <person name="George R.A."/>
            <person name="Guarin H."/>
            <person name="Kronmiller B."/>
            <person name="Pacleb J.M."/>
            <person name="Park S."/>
            <person name="Wan K.H."/>
            <person name="Rubin G.M."/>
            <person name="Celniker S.E."/>
        </authorList>
    </citation>
    <scope>NUCLEOTIDE SEQUENCE [LARGE SCALE MRNA] (ISOFORMS 2 AND 3)</scope>
    <source>
        <strain>Berkeley</strain>
    </source>
</reference>
<reference key="7">
    <citation type="journal article" date="2008" name="J. Proteome Res.">
        <title>Phosphoproteome analysis of Drosophila melanogaster embryos.</title>
        <authorList>
            <person name="Zhai B."/>
            <person name="Villen J."/>
            <person name="Beausoleil S.A."/>
            <person name="Mintseris J."/>
            <person name="Gygi S.P."/>
        </authorList>
    </citation>
    <scope>PHOSPHORYLATION [LARGE SCALE ANALYSIS] AT SER-338 AND SER-341</scope>
    <scope>IDENTIFICATION BY MASS SPECTROMETRY</scope>
    <source>
        <tissue>Embryo</tissue>
    </source>
</reference>
<reference key="8">
    <citation type="submission" date="2007-10" db="PDB data bank">
        <title>Solution structure of the neuz (NHR) domain in neuralized from Drosophila melanogaster.</title>
        <authorList>
            <consortium name="RIKEN structural genomics initiative (RSGI)"/>
        </authorList>
    </citation>
    <scope>STRUCTURE BY NMR OF 106-266</scope>
</reference>
<evidence type="ECO:0000255" key="1">
    <source>
        <dbReference type="PROSITE-ProRule" id="PRU00175"/>
    </source>
</evidence>
<evidence type="ECO:0000255" key="2">
    <source>
        <dbReference type="PROSITE-ProRule" id="PRU00400"/>
    </source>
</evidence>
<evidence type="ECO:0000256" key="3">
    <source>
        <dbReference type="SAM" id="MobiDB-lite"/>
    </source>
</evidence>
<evidence type="ECO:0000269" key="4">
    <source>
    </source>
</evidence>
<evidence type="ECO:0000303" key="5">
    <source>
    </source>
</evidence>
<evidence type="ECO:0000303" key="6">
    <source>
    </source>
</evidence>
<evidence type="ECO:0000305" key="7"/>
<evidence type="ECO:0007829" key="8">
    <source>
        <dbReference type="PDB" id="2YUE"/>
    </source>
</evidence>
<evidence type="ECO:0007829" key="9">
    <source>
        <dbReference type="PDB" id="4KG0"/>
    </source>
</evidence>
<organism>
    <name type="scientific">Drosophila melanogaster</name>
    <name type="common">Fruit fly</name>
    <dbReference type="NCBI Taxonomy" id="7227"/>
    <lineage>
        <taxon>Eukaryota</taxon>
        <taxon>Metazoa</taxon>
        <taxon>Ecdysozoa</taxon>
        <taxon>Arthropoda</taxon>
        <taxon>Hexapoda</taxon>
        <taxon>Insecta</taxon>
        <taxon>Pterygota</taxon>
        <taxon>Neoptera</taxon>
        <taxon>Endopterygota</taxon>
        <taxon>Diptera</taxon>
        <taxon>Brachycera</taxon>
        <taxon>Muscomorpha</taxon>
        <taxon>Ephydroidea</taxon>
        <taxon>Drosophilidae</taxon>
        <taxon>Drosophila</taxon>
        <taxon>Sophophora</taxon>
    </lineage>
</organism>
<gene>
    <name type="primary">neur</name>
    <name type="synonym">neu</name>
    <name type="ORF">CG11988</name>
</gene>